<keyword id="KW-1003">Cell membrane</keyword>
<keyword id="KW-1015">Disulfide bond</keyword>
<keyword id="KW-0297">G-protein coupled receptor</keyword>
<keyword id="KW-0325">Glycoprotein</keyword>
<keyword id="KW-0472">Membrane</keyword>
<keyword id="KW-0597">Phosphoprotein</keyword>
<keyword id="KW-0675">Receptor</keyword>
<keyword id="KW-1185">Reference proteome</keyword>
<keyword id="KW-0807">Transducer</keyword>
<keyword id="KW-0812">Transmembrane</keyword>
<keyword id="KW-1133">Transmembrane helix</keyword>
<sequence>MEGAFAANWSAEAVNGSAAPPGTEGNRTAGPPQRNEALARVEVAVLSLILFLALSGNACVLLALRTTRHKHSRLFFFMKHLSIADLAVAVFQVLPQLLWDITFRFYGPDLLCRLVKYLQVVGMFASTYLLLLMSLDRCLAICQPLRSLRRRTDRLAVLATWLGCLVASAPQVHIFSLREVADGVFDCWAVFIQPWGPKAYITWITLAVYIVPVIVLAACYGLISFKIWQNLRLKTEAAAAEASAGAEGAAADCAGRAALARVSNVKLISKAKIRTVKMTFIVVLAFIVCWTPFFFKQMWSVWDADAPKEASAFIIAMLLASLNSCCNPWIYMLFTGHLFQDLVQRFLCCSFRRLKGSQLGETSVTKKIHSYTFVLSRHSSSQRSCSQPSTV</sequence>
<evidence type="ECO:0000250" key="1">
    <source>
        <dbReference type="UniProtKB" id="P70536"/>
    </source>
</evidence>
<evidence type="ECO:0000255" key="2"/>
<evidence type="ECO:0000255" key="3">
    <source>
        <dbReference type="PROSITE-ProRule" id="PRU00521"/>
    </source>
</evidence>
<name>OXYR_SHEEP</name>
<feature type="chain" id="PRO_0000070003" description="Oxytocin receptor">
    <location>
        <begin position="1"/>
        <end position="391"/>
    </location>
</feature>
<feature type="topological domain" description="Extracellular" evidence="2">
    <location>
        <begin position="1"/>
        <end position="38"/>
    </location>
</feature>
<feature type="transmembrane region" description="Helical; Name=1" evidence="2">
    <location>
        <begin position="39"/>
        <end position="63"/>
    </location>
</feature>
<feature type="topological domain" description="Cytoplasmic" evidence="2">
    <location>
        <begin position="64"/>
        <end position="74"/>
    </location>
</feature>
<feature type="transmembrane region" description="Helical; Name=2" evidence="2">
    <location>
        <begin position="75"/>
        <end position="97"/>
    </location>
</feature>
<feature type="topological domain" description="Extracellular" evidence="2">
    <location>
        <begin position="98"/>
        <end position="113"/>
    </location>
</feature>
<feature type="transmembrane region" description="Helical; Name=3" evidence="2">
    <location>
        <begin position="114"/>
        <end position="135"/>
    </location>
</feature>
<feature type="topological domain" description="Cytoplasmic" evidence="2">
    <location>
        <begin position="136"/>
        <end position="154"/>
    </location>
</feature>
<feature type="transmembrane region" description="Helical; Name=4" evidence="2">
    <location>
        <begin position="155"/>
        <end position="175"/>
    </location>
</feature>
<feature type="topological domain" description="Extracellular" evidence="2">
    <location>
        <begin position="176"/>
        <end position="202"/>
    </location>
</feature>
<feature type="transmembrane region" description="Helical; Name=5" evidence="2">
    <location>
        <begin position="203"/>
        <end position="225"/>
    </location>
</feature>
<feature type="topological domain" description="Cytoplasmic" evidence="2">
    <location>
        <begin position="226"/>
        <end position="277"/>
    </location>
</feature>
<feature type="transmembrane region" description="Helical; Name=6" evidence="2">
    <location>
        <begin position="278"/>
        <end position="296"/>
    </location>
</feature>
<feature type="topological domain" description="Extracellular" evidence="2">
    <location>
        <begin position="297"/>
        <end position="311"/>
    </location>
</feature>
<feature type="transmembrane region" description="Helical; Name=7" evidence="2">
    <location>
        <begin position="312"/>
        <end position="334"/>
    </location>
</feature>
<feature type="topological domain" description="Cytoplasmic" evidence="2">
    <location>
        <begin position="335"/>
        <end position="391"/>
    </location>
</feature>
<feature type="modified residue" description="Phosphoserine" evidence="1">
    <location>
        <position position="370"/>
    </location>
</feature>
<feature type="glycosylation site" description="N-linked (GlcNAc...) asparagine" evidence="2">
    <location>
        <position position="8"/>
    </location>
</feature>
<feature type="glycosylation site" description="N-linked (GlcNAc...) asparagine" evidence="2">
    <location>
        <position position="15"/>
    </location>
</feature>
<feature type="glycosylation site" description="N-linked (GlcNAc...) asparagine" evidence="2">
    <location>
        <position position="26"/>
    </location>
</feature>
<feature type="disulfide bond" evidence="3">
    <location>
        <begin position="112"/>
        <end position="187"/>
    </location>
</feature>
<accession>Q28756</accession>
<gene>
    <name type="primary">OXTR</name>
</gene>
<proteinExistence type="evidence at protein level"/>
<comment type="function">
    <text>Receptor for oxytocin. The activity of this receptor is mediated by G proteins which activate a phosphatidylinositol-calcium second messenger system.</text>
</comment>
<comment type="subcellular location">
    <subcellularLocation>
        <location>Cell membrane</location>
        <topology>Multi-pass membrane protein</topology>
    </subcellularLocation>
</comment>
<comment type="similarity">
    <text evidence="3">Belongs to the G-protein coupled receptor 1 family. Vasopressin/oxytocin receptor subfamily.</text>
</comment>
<reference key="1">
    <citation type="journal article" date="1995" name="J. Mol. Endocrinol.">
        <title>Structure and expression of an ovine endometrial oxytocin receptor cDNA.</title>
        <authorList>
            <person name="Riley P.R."/>
            <person name="Flint A.P.F."/>
            <person name="Abayasekara D.R.E."/>
            <person name="Stewart H.J."/>
        </authorList>
    </citation>
    <scope>NUCLEOTIDE SEQUENCE [MRNA]</scope>
    <source>
        <tissue>Endometrium</tissue>
    </source>
</reference>
<reference key="2">
    <citation type="journal article" date="1996" name="J. Endocrinol.">
        <title>Functional characterisation of an ovine endometrial oxytocin receptor cDNA transiently expressed in Cos-7 cells.</title>
        <authorList>
            <person name="Riley P.R."/>
            <person name="Abayasekara D.R.E."/>
            <person name="Stewart H.J."/>
            <person name="Flint A.P.F."/>
        </authorList>
    </citation>
    <scope>CHARACTERIZATION</scope>
</reference>
<dbReference type="EMBL" id="X87986">
    <property type="protein sequence ID" value="CAA61239.1"/>
    <property type="molecule type" value="mRNA"/>
</dbReference>
<dbReference type="SMR" id="Q28756"/>
<dbReference type="STRING" id="9940.ENSOARP00000008033"/>
<dbReference type="GlyCosmos" id="Q28756">
    <property type="glycosylation" value="3 sites, No reported glycans"/>
</dbReference>
<dbReference type="PaxDb" id="9940-ENSOARP00000008033"/>
<dbReference type="eggNOG" id="KOG3656">
    <property type="taxonomic scope" value="Eukaryota"/>
</dbReference>
<dbReference type="Proteomes" id="UP000002356">
    <property type="component" value="Unplaced"/>
</dbReference>
<dbReference type="GO" id="GO:0005886">
    <property type="term" value="C:plasma membrane"/>
    <property type="evidence" value="ECO:0007669"/>
    <property type="project" value="UniProtKB-SubCell"/>
</dbReference>
<dbReference type="GO" id="GO:0004990">
    <property type="term" value="F:oxytocin receptor activity"/>
    <property type="evidence" value="ECO:0007669"/>
    <property type="project" value="InterPro"/>
</dbReference>
<dbReference type="GO" id="GO:0042277">
    <property type="term" value="F:peptide binding"/>
    <property type="evidence" value="ECO:0007669"/>
    <property type="project" value="TreeGrafter"/>
</dbReference>
<dbReference type="GO" id="GO:0005000">
    <property type="term" value="F:vasopressin receptor activity"/>
    <property type="evidence" value="ECO:0007669"/>
    <property type="project" value="InterPro"/>
</dbReference>
<dbReference type="GO" id="GO:0032870">
    <property type="term" value="P:cellular response to hormone stimulus"/>
    <property type="evidence" value="ECO:0007669"/>
    <property type="project" value="TreeGrafter"/>
</dbReference>
<dbReference type="GO" id="GO:0007565">
    <property type="term" value="P:female pregnancy"/>
    <property type="evidence" value="ECO:0007669"/>
    <property type="project" value="TreeGrafter"/>
</dbReference>
<dbReference type="GO" id="GO:0060137">
    <property type="term" value="P:maternal process involved in parturition"/>
    <property type="evidence" value="ECO:0007669"/>
    <property type="project" value="TreeGrafter"/>
</dbReference>
<dbReference type="GO" id="GO:0045907">
    <property type="term" value="P:positive regulation of vasoconstriction"/>
    <property type="evidence" value="ECO:0007669"/>
    <property type="project" value="TreeGrafter"/>
</dbReference>
<dbReference type="GO" id="GO:0001992">
    <property type="term" value="P:regulation of systemic arterial blood pressure by vasopressin"/>
    <property type="evidence" value="ECO:0007669"/>
    <property type="project" value="TreeGrafter"/>
</dbReference>
<dbReference type="CDD" id="cd15387">
    <property type="entry name" value="7tmA_OT_R"/>
    <property type="match status" value="1"/>
</dbReference>
<dbReference type="FunFam" id="1.20.1070.10:FF:000145">
    <property type="entry name" value="Oxytocin receptor"/>
    <property type="match status" value="1"/>
</dbReference>
<dbReference type="Gene3D" id="1.20.1070.10">
    <property type="entry name" value="Rhodopsin 7-helix transmembrane proteins"/>
    <property type="match status" value="1"/>
</dbReference>
<dbReference type="InterPro" id="IPR000276">
    <property type="entry name" value="GPCR_Rhodpsn"/>
</dbReference>
<dbReference type="InterPro" id="IPR017452">
    <property type="entry name" value="GPCR_Rhodpsn_7TM"/>
</dbReference>
<dbReference type="InterPro" id="IPR002062">
    <property type="entry name" value="Oxytocn_rcpt"/>
</dbReference>
<dbReference type="InterPro" id="IPR001817">
    <property type="entry name" value="Vasoprsn_rcpt"/>
</dbReference>
<dbReference type="PANTHER" id="PTHR24241">
    <property type="entry name" value="NEUROPEPTIDE RECEPTOR-RELATED G-PROTEIN COUPLED RECEPTOR"/>
    <property type="match status" value="1"/>
</dbReference>
<dbReference type="PANTHER" id="PTHR24241:SF89">
    <property type="entry name" value="OXYTOCIN RECEPTOR"/>
    <property type="match status" value="1"/>
</dbReference>
<dbReference type="Pfam" id="PF00001">
    <property type="entry name" value="7tm_1"/>
    <property type="match status" value="1"/>
</dbReference>
<dbReference type="PRINTS" id="PR00237">
    <property type="entry name" value="GPCRRHODOPSN"/>
</dbReference>
<dbReference type="PRINTS" id="PR00665">
    <property type="entry name" value="OXYTOCINR"/>
</dbReference>
<dbReference type="PRINTS" id="PR00896">
    <property type="entry name" value="VASOPRESSINR"/>
</dbReference>
<dbReference type="SUPFAM" id="SSF81321">
    <property type="entry name" value="Family A G protein-coupled receptor-like"/>
    <property type="match status" value="1"/>
</dbReference>
<dbReference type="PROSITE" id="PS00237">
    <property type="entry name" value="G_PROTEIN_RECEP_F1_1"/>
    <property type="match status" value="1"/>
</dbReference>
<dbReference type="PROSITE" id="PS50262">
    <property type="entry name" value="G_PROTEIN_RECEP_F1_2"/>
    <property type="match status" value="1"/>
</dbReference>
<protein>
    <recommendedName>
        <fullName>Oxytocin receptor</fullName>
        <shortName>OT-R</shortName>
    </recommendedName>
</protein>
<organism>
    <name type="scientific">Ovis aries</name>
    <name type="common">Sheep</name>
    <dbReference type="NCBI Taxonomy" id="9940"/>
    <lineage>
        <taxon>Eukaryota</taxon>
        <taxon>Metazoa</taxon>
        <taxon>Chordata</taxon>
        <taxon>Craniata</taxon>
        <taxon>Vertebrata</taxon>
        <taxon>Euteleostomi</taxon>
        <taxon>Mammalia</taxon>
        <taxon>Eutheria</taxon>
        <taxon>Laurasiatheria</taxon>
        <taxon>Artiodactyla</taxon>
        <taxon>Ruminantia</taxon>
        <taxon>Pecora</taxon>
        <taxon>Bovidae</taxon>
        <taxon>Caprinae</taxon>
        <taxon>Ovis</taxon>
    </lineage>
</organism>